<evidence type="ECO:0000250" key="1"/>
<evidence type="ECO:0000250" key="2">
    <source>
        <dbReference type="UniProtKB" id="P00533"/>
    </source>
</evidence>
<evidence type="ECO:0000255" key="3"/>
<evidence type="ECO:0000255" key="4">
    <source>
        <dbReference type="PROSITE-ProRule" id="PRU00159"/>
    </source>
</evidence>
<evidence type="ECO:0000255" key="5">
    <source>
        <dbReference type="PROSITE-ProRule" id="PRU10028"/>
    </source>
</evidence>
<evidence type="ECO:0000256" key="6">
    <source>
        <dbReference type="SAM" id="MobiDB-lite"/>
    </source>
</evidence>
<evidence type="ECO:0000269" key="7">
    <source>
    </source>
</evidence>
<evidence type="ECO:0000269" key="8">
    <source>
    </source>
</evidence>
<evidence type="ECO:0000269" key="9">
    <source>
    </source>
</evidence>
<evidence type="ECO:0000269" key="10">
    <source>
    </source>
</evidence>
<evidence type="ECO:0000269" key="11">
    <source>
    </source>
</evidence>
<evidence type="ECO:0000269" key="12">
    <source>
    </source>
</evidence>
<evidence type="ECO:0000269" key="13">
    <source>
    </source>
</evidence>
<evidence type="ECO:0000269" key="14">
    <source>
    </source>
</evidence>
<evidence type="ECO:0000269" key="15">
    <source>
    </source>
</evidence>
<evidence type="ECO:0000269" key="16">
    <source>
    </source>
</evidence>
<evidence type="ECO:0000269" key="17">
    <source>
    </source>
</evidence>
<evidence type="ECO:0000269" key="18">
    <source>
    </source>
</evidence>
<evidence type="ECO:0000269" key="19">
    <source>
    </source>
</evidence>
<evidence type="ECO:0000269" key="20">
    <source>
    </source>
</evidence>
<evidence type="ECO:0000305" key="21"/>
<evidence type="ECO:0000312" key="22">
    <source>
        <dbReference type="MGI" id="MGI:95294"/>
    </source>
</evidence>
<evidence type="ECO:0007744" key="23">
    <source>
    </source>
</evidence>
<sequence length="1210" mass="134853">MRPSGTARTTLLVLLTALCAAGGALEEKKVCQGTSNRLTQLGTFEDHFLSLQRMYNNCEVVLGNLEITYVQRNYDLSFLKTIQEVAGYVLIALNTVERIPLENLQIIRGNALYENTYALAILSNYGTNRTGLRELPMRNLQEILIGAVRFSNNPILCNMDTIQWRDIVQNVFMSNMSMDLQSHPSSCPKCDPSCPNGSCWGGGEENCQKLTKIICAQQCSHRCRGRSPSDCCHNQCAAGCTGPRESDCLVCQKFQDEATCKDTCPPLMLYNPTTYQMDVNPEGKYSFGATCVKKCPRNYVVTDHGSCVRACGPDYYEVEEDGIRKCKKCDGPCRKVCNGIGIGEFKDTLSINATNIKHFKYCTAISGDLHILPVAFKGDSFTRTPPLDPRELEILKTVKEITGFLLIQAWPDNWTDLHAFENLEIIRGRTKQHGQFSLAVVGLNITSLGLRSLKEISDGDVIISGNRNLCYANTINWKKLFGTPNQKTKIMNNRAEKDCKAVNHVCNPLCSSEGCWGPEPRDCVSCQNVSRGRECVEKCNILEGEPREFVENSECIQCHPECLPQAMNITCTGRGPDNCIQCAHYIDGPHCVKTCPAGIMGENNTLVWKYADANNVCHLCHANCTYGCAGPGLQGCEVWPSGPKIPSIATGIVGGLLFIVVVALGIGLFMRRRHIVRKRTLRRLLQERELVEPLTPSGEAPNQAHLRILKETEFKKIKVLGSGAFGTVYKGLWIPEGEKVKIPVAIKELREATSPKANKEILDEAYVMASVDNPHVCRLLGICLTSTVQLITQLMPYGCLLDYVREHKDNIGSQYLLNWCVQIAKGMNYLEDRRLVHRDLAARNVLVKTPQHVKITDFGLAKLLGAEEKEYHAEGGKVPIKWMALESILHRIYTHQSDVWSYGVTVWELMTFGSKPYDGIPASDISSILEKGERLPQPPICTIDVYMIMVKCWMIDADSRPKFRELILEFSKMARDPQRYLVIQGDERMHLPSPTDSNFYRALMDEEDMEDVVDADEYLIPQQGFFNSPSTSRTPLLSSLSATSNNSTVACINRNGSCRVKEDAFLQRYSSDPTGAVTEDNIDDAFLPVPEYVNQSVPKRPAGSVQNPVYHNQPLHPAPGRDLHYQNPHSNAVGNPEYLNTAQPTCLSSGFNSPALWIQKGSHQMSLDNPDYQQDFFPKETKPNGIFKGPTAENAEYLRVAPPSSEFIGA</sequence>
<proteinExistence type="evidence at protein level"/>
<protein>
    <recommendedName>
        <fullName evidence="21">Epidermal growth factor receptor</fullName>
        <ecNumber>2.7.10.1</ecNumber>
    </recommendedName>
</protein>
<dbReference type="EC" id="2.7.10.1"/>
<dbReference type="EMBL" id="X78987">
    <property type="protein sequence ID" value="CAA55587.1"/>
    <property type="molecule type" value="mRNA"/>
</dbReference>
<dbReference type="EMBL" id="U03425">
    <property type="protein sequence ID" value="AAA17899.1"/>
    <property type="molecule type" value="mRNA"/>
</dbReference>
<dbReference type="EMBL" id="X59698">
    <property type="protein sequence ID" value="CAA42219.1"/>
    <property type="molecule type" value="mRNA"/>
</dbReference>
<dbReference type="EMBL" id="L06864">
    <property type="protein sequence ID" value="AAA53029.1"/>
    <property type="molecule type" value="mRNA"/>
</dbReference>
<dbReference type="EMBL" id="Z12608">
    <property type="protein sequence ID" value="CAA78249.1"/>
    <property type="molecule type" value="mRNA"/>
</dbReference>
<dbReference type="CCDS" id="CCDS24443.1"/>
<dbReference type="PIR" id="A53183">
    <property type="entry name" value="A53183"/>
</dbReference>
<dbReference type="RefSeq" id="NP_997538.1">
    <property type="nucleotide sequence ID" value="NM_207655.2"/>
</dbReference>
<dbReference type="BMRB" id="Q01279"/>
<dbReference type="SMR" id="Q01279"/>
<dbReference type="BioGRID" id="199402">
    <property type="interactions" value="44"/>
</dbReference>
<dbReference type="CORUM" id="Q01279"/>
<dbReference type="DIP" id="DIP-5763N"/>
<dbReference type="FunCoup" id="Q01279">
    <property type="interactions" value="2382"/>
</dbReference>
<dbReference type="IntAct" id="Q01279">
    <property type="interactions" value="14"/>
</dbReference>
<dbReference type="MINT" id="Q01279"/>
<dbReference type="STRING" id="10090.ENSMUSP00000020329"/>
<dbReference type="BindingDB" id="Q01279"/>
<dbReference type="ChEMBL" id="CHEMBL3608"/>
<dbReference type="DrugCentral" id="Q01279"/>
<dbReference type="GlyConnect" id="2297">
    <property type="glycosylation" value="1 N-Linked glycan (1 site)"/>
</dbReference>
<dbReference type="GlyCosmos" id="Q01279">
    <property type="glycosylation" value="10 sites, 1 glycan"/>
</dbReference>
<dbReference type="GlyGen" id="Q01279">
    <property type="glycosylation" value="11 sites, 7 N-linked glycans (7 sites)"/>
</dbReference>
<dbReference type="iPTMnet" id="Q01279"/>
<dbReference type="PhosphoSitePlus" id="Q01279"/>
<dbReference type="SwissPalm" id="Q01279"/>
<dbReference type="CPTAC" id="non-CPTAC-3383"/>
<dbReference type="jPOST" id="Q01279"/>
<dbReference type="PaxDb" id="10090-ENSMUSP00000020329"/>
<dbReference type="PeptideAtlas" id="Q01279"/>
<dbReference type="ProteomicsDB" id="277563"/>
<dbReference type="ABCD" id="Q01279">
    <property type="antibodies" value="1 sequenced antibody"/>
</dbReference>
<dbReference type="Antibodypedia" id="718">
    <property type="antibodies" value="10740 antibodies from 66 providers"/>
</dbReference>
<dbReference type="DNASU" id="13649"/>
<dbReference type="Ensembl" id="ENSMUST00000020329.13">
    <property type="protein sequence ID" value="ENSMUSP00000020329.7"/>
    <property type="gene ID" value="ENSMUSG00000020122.17"/>
</dbReference>
<dbReference type="GeneID" id="13649"/>
<dbReference type="KEGG" id="mmu:13649"/>
<dbReference type="UCSC" id="uc007ibo.1">
    <property type="organism name" value="mouse"/>
</dbReference>
<dbReference type="AGR" id="MGI:95294"/>
<dbReference type="CTD" id="1956"/>
<dbReference type="MGI" id="MGI:95294">
    <property type="gene designation" value="Egfr"/>
</dbReference>
<dbReference type="VEuPathDB" id="HostDB:ENSMUSG00000020122"/>
<dbReference type="eggNOG" id="KOG1025">
    <property type="taxonomic scope" value="Eukaryota"/>
</dbReference>
<dbReference type="GeneTree" id="ENSGT00940000155450"/>
<dbReference type="HOGENOM" id="CLU_003384_0_1_1"/>
<dbReference type="InParanoid" id="Q01279"/>
<dbReference type="OMA" id="GYYYEWV"/>
<dbReference type="OrthoDB" id="6219513at2759"/>
<dbReference type="PhylomeDB" id="Q01279"/>
<dbReference type="TreeFam" id="TF106002"/>
<dbReference type="BRENDA" id="2.7.10.1">
    <property type="organism ID" value="3474"/>
</dbReference>
<dbReference type="Reactome" id="R-MMU-1227986">
    <property type="pathway name" value="Signaling by ERBB2"/>
</dbReference>
<dbReference type="Reactome" id="R-MMU-1236394">
    <property type="pathway name" value="Signaling by ERBB4"/>
</dbReference>
<dbReference type="Reactome" id="R-MMU-1250196">
    <property type="pathway name" value="SHC1 events in ERBB2 signaling"/>
</dbReference>
<dbReference type="Reactome" id="R-MMU-1257604">
    <property type="pathway name" value="PIP3 activates AKT signaling"/>
</dbReference>
<dbReference type="Reactome" id="R-MMU-177929">
    <property type="pathway name" value="Signaling by EGFR"/>
</dbReference>
<dbReference type="Reactome" id="R-MMU-179812">
    <property type="pathway name" value="GRB2 events in EGFR signaling"/>
</dbReference>
<dbReference type="Reactome" id="R-MMU-180292">
    <property type="pathway name" value="GAB1 signalosome"/>
</dbReference>
<dbReference type="Reactome" id="R-MMU-180336">
    <property type="pathway name" value="SHC1 events in EGFR signaling"/>
</dbReference>
<dbReference type="Reactome" id="R-MMU-182971">
    <property type="pathway name" value="EGFR downregulation"/>
</dbReference>
<dbReference type="Reactome" id="R-MMU-1963642">
    <property type="pathway name" value="PI3K events in ERBB2 signaling"/>
</dbReference>
<dbReference type="Reactome" id="R-MMU-212718">
    <property type="pathway name" value="EGFR interacts with phospholipase C-gamma"/>
</dbReference>
<dbReference type="Reactome" id="R-MMU-2179392">
    <property type="pathway name" value="EGFR Transactivation by Gastrin"/>
</dbReference>
<dbReference type="Reactome" id="R-MMU-445144">
    <property type="pathway name" value="Signal transduction by L1"/>
</dbReference>
<dbReference type="Reactome" id="R-MMU-5673001">
    <property type="pathway name" value="RAF/MAP kinase cascade"/>
</dbReference>
<dbReference type="Reactome" id="R-MMU-6785631">
    <property type="pathway name" value="ERBB2 Regulates Cell Motility"/>
</dbReference>
<dbReference type="Reactome" id="R-MMU-6811558">
    <property type="pathway name" value="PI5P, PP2A and IER3 Regulate PI3K/AKT Signaling"/>
</dbReference>
<dbReference type="Reactome" id="R-MMU-8847993">
    <property type="pathway name" value="ERBB2 Activates PTK6 Signaling"/>
</dbReference>
<dbReference type="Reactome" id="R-MMU-8856825">
    <property type="pathway name" value="Cargo recognition for clathrin-mediated endocytosis"/>
</dbReference>
<dbReference type="Reactome" id="R-MMU-8856828">
    <property type="pathway name" value="Clathrin-mediated endocytosis"/>
</dbReference>
<dbReference type="Reactome" id="R-MMU-8857538">
    <property type="pathway name" value="PTK6 promotes HIF1A stabilization"/>
</dbReference>
<dbReference type="Reactome" id="R-MMU-8863795">
    <property type="pathway name" value="Downregulation of ERBB2 signaling"/>
</dbReference>
<dbReference type="Reactome" id="R-MMU-9009391">
    <property type="pathway name" value="Extra-nuclear estrogen signaling"/>
</dbReference>
<dbReference type="Reactome" id="R-MMU-9013507">
    <property type="pathway name" value="NOTCH3 Activation and Transmission of Signal to the Nucleus"/>
</dbReference>
<dbReference type="BioGRID-ORCS" id="13649">
    <property type="hits" value="2 hits in 118 CRISPR screens"/>
</dbReference>
<dbReference type="ChiTaRS" id="Egfr">
    <property type="organism name" value="mouse"/>
</dbReference>
<dbReference type="PRO" id="PR:Q01279"/>
<dbReference type="Proteomes" id="UP000000589">
    <property type="component" value="Chromosome 11"/>
</dbReference>
<dbReference type="RNAct" id="Q01279">
    <property type="molecule type" value="protein"/>
</dbReference>
<dbReference type="Bgee" id="ENSMUSG00000020122">
    <property type="expression patterns" value="Expressed in left lobe of liver and 294 other cell types or tissues"/>
</dbReference>
<dbReference type="ExpressionAtlas" id="Q01279">
    <property type="expression patterns" value="baseline and differential"/>
</dbReference>
<dbReference type="GO" id="GO:0016323">
    <property type="term" value="C:basolateral plasma membrane"/>
    <property type="evidence" value="ECO:0000314"/>
    <property type="project" value="MGI"/>
</dbReference>
<dbReference type="GO" id="GO:0030054">
    <property type="term" value="C:cell junction"/>
    <property type="evidence" value="ECO:0007669"/>
    <property type="project" value="Ensembl"/>
</dbReference>
<dbReference type="GO" id="GO:0009986">
    <property type="term" value="C:cell surface"/>
    <property type="evidence" value="ECO:0000314"/>
    <property type="project" value="MGI"/>
</dbReference>
<dbReference type="GO" id="GO:0036064">
    <property type="term" value="C:ciliary basal body"/>
    <property type="evidence" value="ECO:0007669"/>
    <property type="project" value="Ensembl"/>
</dbReference>
<dbReference type="GO" id="GO:0005829">
    <property type="term" value="C:cytosol"/>
    <property type="evidence" value="ECO:0007669"/>
    <property type="project" value="Ensembl"/>
</dbReference>
<dbReference type="GO" id="GO:0031901">
    <property type="term" value="C:early endosome membrane"/>
    <property type="evidence" value="ECO:0007669"/>
    <property type="project" value="Ensembl"/>
</dbReference>
<dbReference type="GO" id="GO:0030139">
    <property type="term" value="C:endocytic vesicle"/>
    <property type="evidence" value="ECO:0000314"/>
    <property type="project" value="MGI"/>
</dbReference>
<dbReference type="GO" id="GO:0005789">
    <property type="term" value="C:endoplasmic reticulum membrane"/>
    <property type="evidence" value="ECO:0007669"/>
    <property type="project" value="UniProtKB-SubCell"/>
</dbReference>
<dbReference type="GO" id="GO:0005768">
    <property type="term" value="C:endosome"/>
    <property type="evidence" value="ECO:0000250"/>
    <property type="project" value="UniProtKB"/>
</dbReference>
<dbReference type="GO" id="GO:0000139">
    <property type="term" value="C:Golgi membrane"/>
    <property type="evidence" value="ECO:0007669"/>
    <property type="project" value="UniProtKB-SubCell"/>
</dbReference>
<dbReference type="GO" id="GO:0045121">
    <property type="term" value="C:membrane raft"/>
    <property type="evidence" value="ECO:0007669"/>
    <property type="project" value="Ensembl"/>
</dbReference>
<dbReference type="GO" id="GO:0097489">
    <property type="term" value="C:multivesicular body, internal vesicle lumen"/>
    <property type="evidence" value="ECO:0007669"/>
    <property type="project" value="Ensembl"/>
</dbReference>
<dbReference type="GO" id="GO:0031965">
    <property type="term" value="C:nuclear membrane"/>
    <property type="evidence" value="ECO:0007669"/>
    <property type="project" value="UniProtKB-SubCell"/>
</dbReference>
<dbReference type="GO" id="GO:0005634">
    <property type="term" value="C:nucleus"/>
    <property type="evidence" value="ECO:0000314"/>
    <property type="project" value="BHF-UCL"/>
</dbReference>
<dbReference type="GO" id="GO:0048471">
    <property type="term" value="C:perinuclear region of cytoplasm"/>
    <property type="evidence" value="ECO:0000314"/>
    <property type="project" value="BHF-UCL"/>
</dbReference>
<dbReference type="GO" id="GO:0005886">
    <property type="term" value="C:plasma membrane"/>
    <property type="evidence" value="ECO:0000314"/>
    <property type="project" value="MGI"/>
</dbReference>
<dbReference type="GO" id="GO:0043235">
    <property type="term" value="C:receptor complex"/>
    <property type="evidence" value="ECO:0000266"/>
    <property type="project" value="MGI"/>
</dbReference>
<dbReference type="GO" id="GO:0032587">
    <property type="term" value="C:ruffle membrane"/>
    <property type="evidence" value="ECO:0007669"/>
    <property type="project" value="Ensembl"/>
</dbReference>
<dbReference type="GO" id="GO:0051015">
    <property type="term" value="F:actin filament binding"/>
    <property type="evidence" value="ECO:0007669"/>
    <property type="project" value="Ensembl"/>
</dbReference>
<dbReference type="GO" id="GO:0005524">
    <property type="term" value="F:ATP binding"/>
    <property type="evidence" value="ECO:0007669"/>
    <property type="project" value="UniProtKB-KW"/>
</dbReference>
<dbReference type="GO" id="GO:0003682">
    <property type="term" value="F:chromatin binding"/>
    <property type="evidence" value="ECO:0000250"/>
    <property type="project" value="UniProtKB"/>
</dbReference>
<dbReference type="GO" id="GO:0048408">
    <property type="term" value="F:epidermal growth factor binding"/>
    <property type="evidence" value="ECO:0000314"/>
    <property type="project" value="MGI"/>
</dbReference>
<dbReference type="GO" id="GO:0005006">
    <property type="term" value="F:epidermal growth factor receptor activity"/>
    <property type="evidence" value="ECO:0000314"/>
    <property type="project" value="MGI"/>
</dbReference>
<dbReference type="GO" id="GO:0042802">
    <property type="term" value="F:identical protein binding"/>
    <property type="evidence" value="ECO:0007669"/>
    <property type="project" value="Ensembl"/>
</dbReference>
<dbReference type="GO" id="GO:0016301">
    <property type="term" value="F:kinase activity"/>
    <property type="evidence" value="ECO:0000314"/>
    <property type="project" value="MGI"/>
</dbReference>
<dbReference type="GO" id="GO:0019900">
    <property type="term" value="F:kinase binding"/>
    <property type="evidence" value="ECO:0007669"/>
    <property type="project" value="Ensembl"/>
</dbReference>
<dbReference type="GO" id="GO:0019903">
    <property type="term" value="F:protein phosphatase binding"/>
    <property type="evidence" value="ECO:0007669"/>
    <property type="project" value="Ensembl"/>
</dbReference>
<dbReference type="GO" id="GO:0030296">
    <property type="term" value="F:protein tyrosine kinase activator activity"/>
    <property type="evidence" value="ECO:0007669"/>
    <property type="project" value="Ensembl"/>
</dbReference>
<dbReference type="GO" id="GO:0004713">
    <property type="term" value="F:protein tyrosine kinase activity"/>
    <property type="evidence" value="ECO:0000314"/>
    <property type="project" value="MGI"/>
</dbReference>
<dbReference type="GO" id="GO:0004714">
    <property type="term" value="F:transmembrane receptor protein tyrosine kinase activity"/>
    <property type="evidence" value="ECO:0000314"/>
    <property type="project" value="MGI"/>
</dbReference>
<dbReference type="GO" id="GO:0004888">
    <property type="term" value="F:transmembrane signaling receptor activity"/>
    <property type="evidence" value="ECO:0000266"/>
    <property type="project" value="MGI"/>
</dbReference>
<dbReference type="GO" id="GO:0031625">
    <property type="term" value="F:ubiquitin protein ligase binding"/>
    <property type="evidence" value="ECO:0007669"/>
    <property type="project" value="Ensembl"/>
</dbReference>
<dbReference type="GO" id="GO:0000902">
    <property type="term" value="P:cell morphogenesis"/>
    <property type="evidence" value="ECO:0000316"/>
    <property type="project" value="MGI"/>
</dbReference>
<dbReference type="GO" id="GO:0008283">
    <property type="term" value="P:cell population proliferation"/>
    <property type="evidence" value="ECO:0000316"/>
    <property type="project" value="MGI"/>
</dbReference>
<dbReference type="GO" id="GO:0007166">
    <property type="term" value="P:cell surface receptor signaling pathway"/>
    <property type="evidence" value="ECO:0000266"/>
    <property type="project" value="MGI"/>
</dbReference>
<dbReference type="GO" id="GO:0098609">
    <property type="term" value="P:cell-cell adhesion"/>
    <property type="evidence" value="ECO:0007669"/>
    <property type="project" value="Ensembl"/>
</dbReference>
<dbReference type="GO" id="GO:0071230">
    <property type="term" value="P:cellular response to amino acid stimulus"/>
    <property type="evidence" value="ECO:0000314"/>
    <property type="project" value="UniProtKB"/>
</dbReference>
<dbReference type="GO" id="GO:0071392">
    <property type="term" value="P:cellular response to estradiol stimulus"/>
    <property type="evidence" value="ECO:0000250"/>
    <property type="project" value="UniProtKB"/>
</dbReference>
<dbReference type="GO" id="GO:0071363">
    <property type="term" value="P:cellular response to growth factor stimulus"/>
    <property type="evidence" value="ECO:0000314"/>
    <property type="project" value="MGI"/>
</dbReference>
<dbReference type="GO" id="GO:0021795">
    <property type="term" value="P:cerebral cortex cell migration"/>
    <property type="evidence" value="ECO:0000315"/>
    <property type="project" value="MGI"/>
</dbReference>
<dbReference type="GO" id="GO:0048546">
    <property type="term" value="P:digestive tract morphogenesis"/>
    <property type="evidence" value="ECO:0000315"/>
    <property type="project" value="MGI"/>
</dbReference>
<dbReference type="GO" id="GO:0001892">
    <property type="term" value="P:embryonic placenta development"/>
    <property type="evidence" value="ECO:0000315"/>
    <property type="project" value="MGI"/>
</dbReference>
<dbReference type="GO" id="GO:0007173">
    <property type="term" value="P:epidermal growth factor receptor signaling pathway"/>
    <property type="evidence" value="ECO:0000314"/>
    <property type="project" value="MGI"/>
</dbReference>
<dbReference type="GO" id="GO:0008544">
    <property type="term" value="P:epidermis development"/>
    <property type="evidence" value="ECO:0000315"/>
    <property type="project" value="MGI"/>
</dbReference>
<dbReference type="GO" id="GO:0050673">
    <property type="term" value="P:epithelial cell proliferation"/>
    <property type="evidence" value="ECO:0000315"/>
    <property type="project" value="MGI"/>
</dbReference>
<dbReference type="GO" id="GO:0038134">
    <property type="term" value="P:ERBB2-EGFR signaling pathway"/>
    <property type="evidence" value="ECO:0000314"/>
    <property type="project" value="MGI"/>
</dbReference>
<dbReference type="GO" id="GO:0061029">
    <property type="term" value="P:eyelid development in camera-type eye"/>
    <property type="evidence" value="ECO:0000316"/>
    <property type="project" value="MGI"/>
</dbReference>
<dbReference type="GO" id="GO:0001942">
    <property type="term" value="P:hair follicle development"/>
    <property type="evidence" value="ECO:0000315"/>
    <property type="project" value="MGI"/>
</dbReference>
<dbReference type="GO" id="GO:0060571">
    <property type="term" value="P:morphogenesis of an epithelial fold"/>
    <property type="evidence" value="ECO:0000315"/>
    <property type="project" value="MGI"/>
</dbReference>
<dbReference type="GO" id="GO:0043066">
    <property type="term" value="P:negative regulation of apoptotic process"/>
    <property type="evidence" value="ECO:0007669"/>
    <property type="project" value="Ensembl"/>
</dbReference>
<dbReference type="GO" id="GO:1905208">
    <property type="term" value="P:negative regulation of cardiocyte differentiation"/>
    <property type="evidence" value="ECO:0007669"/>
    <property type="project" value="Ensembl"/>
</dbReference>
<dbReference type="GO" id="GO:0042059">
    <property type="term" value="P:negative regulation of epidermal growth factor receptor signaling pathway"/>
    <property type="evidence" value="ECO:0000314"/>
    <property type="project" value="MGI"/>
</dbReference>
<dbReference type="GO" id="GO:0042177">
    <property type="term" value="P:negative regulation of protein catabolic process"/>
    <property type="evidence" value="ECO:0007669"/>
    <property type="project" value="Ensembl"/>
</dbReference>
<dbReference type="GO" id="GO:0043491">
    <property type="term" value="P:phosphatidylinositol 3-kinase/protein kinase B signal transduction"/>
    <property type="evidence" value="ECO:0007669"/>
    <property type="project" value="Ensembl"/>
</dbReference>
<dbReference type="GO" id="GO:0090263">
    <property type="term" value="P:positive regulation of canonical Wnt signaling pathway"/>
    <property type="evidence" value="ECO:0007669"/>
    <property type="project" value="Ensembl"/>
</dbReference>
<dbReference type="GO" id="GO:0030307">
    <property type="term" value="P:positive regulation of cell growth"/>
    <property type="evidence" value="ECO:0000250"/>
    <property type="project" value="UniProtKB"/>
</dbReference>
<dbReference type="GO" id="GO:0030335">
    <property type="term" value="P:positive regulation of cell migration"/>
    <property type="evidence" value="ECO:0007669"/>
    <property type="project" value="Ensembl"/>
</dbReference>
<dbReference type="GO" id="GO:0008284">
    <property type="term" value="P:positive regulation of cell population proliferation"/>
    <property type="evidence" value="ECO:0000314"/>
    <property type="project" value="MGI"/>
</dbReference>
<dbReference type="GO" id="GO:0045739">
    <property type="term" value="P:positive regulation of DNA repair"/>
    <property type="evidence" value="ECO:0007669"/>
    <property type="project" value="Ensembl"/>
</dbReference>
<dbReference type="GO" id="GO:0045740">
    <property type="term" value="P:positive regulation of DNA replication"/>
    <property type="evidence" value="ECO:0007669"/>
    <property type="project" value="Ensembl"/>
</dbReference>
<dbReference type="GO" id="GO:0050679">
    <property type="term" value="P:positive regulation of epithelial cell proliferation"/>
    <property type="evidence" value="ECO:0000315"/>
    <property type="project" value="MGI"/>
</dbReference>
<dbReference type="GO" id="GO:0070374">
    <property type="term" value="P:positive regulation of ERK1 and ERK2 cascade"/>
    <property type="evidence" value="ECO:0000250"/>
    <property type="project" value="UniProtKB"/>
</dbReference>
<dbReference type="GO" id="GO:0048146">
    <property type="term" value="P:positive regulation of fibroblast proliferation"/>
    <property type="evidence" value="ECO:0000315"/>
    <property type="project" value="BHF-UCL"/>
</dbReference>
<dbReference type="GO" id="GO:1900087">
    <property type="term" value="P:positive regulation of G1/S transition of mitotic cell cycle"/>
    <property type="evidence" value="ECO:0007669"/>
    <property type="project" value="Ensembl"/>
</dbReference>
<dbReference type="GO" id="GO:1902895">
    <property type="term" value="P:positive regulation of miRNA transcription"/>
    <property type="evidence" value="ECO:0007669"/>
    <property type="project" value="Ensembl"/>
</dbReference>
<dbReference type="GO" id="GO:0051897">
    <property type="term" value="P:positive regulation of phosphatidylinositol 3-kinase/protein kinase B signal transduction"/>
    <property type="evidence" value="ECO:0007669"/>
    <property type="project" value="Ensembl"/>
</dbReference>
<dbReference type="GO" id="GO:0090037">
    <property type="term" value="P:positive regulation of protein kinase C signaling"/>
    <property type="evidence" value="ECO:0007669"/>
    <property type="project" value="Ensembl"/>
</dbReference>
<dbReference type="GO" id="GO:1902966">
    <property type="term" value="P:positive regulation of protein localization to early endosome"/>
    <property type="evidence" value="ECO:0000250"/>
    <property type="project" value="UniProtKB"/>
</dbReference>
<dbReference type="GO" id="GO:1903078">
    <property type="term" value="P:positive regulation of protein localization to plasma membrane"/>
    <property type="evidence" value="ECO:0007669"/>
    <property type="project" value="Ensembl"/>
</dbReference>
<dbReference type="GO" id="GO:0001934">
    <property type="term" value="P:positive regulation of protein phosphorylation"/>
    <property type="evidence" value="ECO:0000250"/>
    <property type="project" value="UniProtKB"/>
</dbReference>
<dbReference type="GO" id="GO:0045944">
    <property type="term" value="P:positive regulation of transcription by RNA polymerase II"/>
    <property type="evidence" value="ECO:0000250"/>
    <property type="project" value="UniProtKB"/>
</dbReference>
<dbReference type="GO" id="GO:0042127">
    <property type="term" value="P:regulation of cell population proliferation"/>
    <property type="evidence" value="ECO:0000316"/>
    <property type="project" value="MGI"/>
</dbReference>
<dbReference type="GO" id="GO:0070141">
    <property type="term" value="P:response to UV-A"/>
    <property type="evidence" value="ECO:0007669"/>
    <property type="project" value="Ensembl"/>
</dbReference>
<dbReference type="GO" id="GO:0007435">
    <property type="term" value="P:salivary gland morphogenesis"/>
    <property type="evidence" value="ECO:0000315"/>
    <property type="project" value="MGI"/>
</dbReference>
<dbReference type="GO" id="GO:0007165">
    <property type="term" value="P:signal transduction"/>
    <property type="evidence" value="ECO:0000314"/>
    <property type="project" value="MGI"/>
</dbReference>
<dbReference type="CDD" id="cd00064">
    <property type="entry name" value="FU"/>
    <property type="match status" value="3"/>
</dbReference>
<dbReference type="CDD" id="cd05108">
    <property type="entry name" value="PTKc_EGFR"/>
    <property type="match status" value="1"/>
</dbReference>
<dbReference type="CDD" id="cd12093">
    <property type="entry name" value="TM_ErbB1"/>
    <property type="match status" value="1"/>
</dbReference>
<dbReference type="FunFam" id="1.10.510.10:FF:000027">
    <property type="entry name" value="Receptor protein-tyrosine kinase"/>
    <property type="match status" value="1"/>
</dbReference>
<dbReference type="FunFam" id="2.10.220.10:FF:000001">
    <property type="entry name" value="Receptor protein-tyrosine kinase"/>
    <property type="match status" value="1"/>
</dbReference>
<dbReference type="FunFam" id="2.10.220.10:FF:000008">
    <property type="entry name" value="Receptor protein-tyrosine kinase"/>
    <property type="match status" value="1"/>
</dbReference>
<dbReference type="FunFam" id="3.30.200.20:FF:000044">
    <property type="entry name" value="Receptor protein-tyrosine kinase"/>
    <property type="match status" value="1"/>
</dbReference>
<dbReference type="FunFam" id="3.80.20.20:FF:000005">
    <property type="entry name" value="Receptor protein-tyrosine kinase"/>
    <property type="match status" value="1"/>
</dbReference>
<dbReference type="FunFam" id="3.80.20.20:FF:000006">
    <property type="entry name" value="Receptor protein-tyrosine kinase"/>
    <property type="match status" value="1"/>
</dbReference>
<dbReference type="Gene3D" id="6.10.250.2930">
    <property type="match status" value="1"/>
</dbReference>
<dbReference type="Gene3D" id="2.10.220.10">
    <property type="entry name" value="Hormone Receptor, Insulin-like Growth Factor Receptor 1, Chain A, domain 2"/>
    <property type="match status" value="3"/>
</dbReference>
<dbReference type="Gene3D" id="3.30.200.20">
    <property type="entry name" value="Phosphorylase Kinase, domain 1"/>
    <property type="match status" value="1"/>
</dbReference>
<dbReference type="Gene3D" id="3.80.20.20">
    <property type="entry name" value="Receptor L-domain"/>
    <property type="match status" value="2"/>
</dbReference>
<dbReference type="Gene3D" id="1.10.510.10">
    <property type="entry name" value="Transferase(Phosphotransferase) domain 1"/>
    <property type="match status" value="1"/>
</dbReference>
<dbReference type="InterPro" id="IPR044912">
    <property type="entry name" value="Egfr_JX_dom"/>
</dbReference>
<dbReference type="InterPro" id="IPR006211">
    <property type="entry name" value="Furin-like_Cys-rich_dom"/>
</dbReference>
<dbReference type="InterPro" id="IPR006212">
    <property type="entry name" value="Furin_repeat"/>
</dbReference>
<dbReference type="InterPro" id="IPR032778">
    <property type="entry name" value="GF_recep_IV"/>
</dbReference>
<dbReference type="InterPro" id="IPR009030">
    <property type="entry name" value="Growth_fac_rcpt_cys_sf"/>
</dbReference>
<dbReference type="InterPro" id="IPR011009">
    <property type="entry name" value="Kinase-like_dom_sf"/>
</dbReference>
<dbReference type="InterPro" id="IPR000719">
    <property type="entry name" value="Prot_kinase_dom"/>
</dbReference>
<dbReference type="InterPro" id="IPR017441">
    <property type="entry name" value="Protein_kinase_ATP_BS"/>
</dbReference>
<dbReference type="InterPro" id="IPR000494">
    <property type="entry name" value="Rcpt_L-dom"/>
</dbReference>
<dbReference type="InterPro" id="IPR036941">
    <property type="entry name" value="Rcpt_L-dom_sf"/>
</dbReference>
<dbReference type="InterPro" id="IPR050122">
    <property type="entry name" value="RTK"/>
</dbReference>
<dbReference type="InterPro" id="IPR001245">
    <property type="entry name" value="Ser-Thr/Tyr_kinase_cat_dom"/>
</dbReference>
<dbReference type="InterPro" id="IPR049328">
    <property type="entry name" value="TM_ErbB1"/>
</dbReference>
<dbReference type="InterPro" id="IPR008266">
    <property type="entry name" value="Tyr_kinase_AS"/>
</dbReference>
<dbReference type="InterPro" id="IPR020635">
    <property type="entry name" value="Tyr_kinase_cat_dom"/>
</dbReference>
<dbReference type="InterPro" id="IPR016245">
    <property type="entry name" value="Tyr_kinase_EGF/ERB/XmrK_rcpt"/>
</dbReference>
<dbReference type="PANTHER" id="PTHR24416:SF91">
    <property type="entry name" value="EPIDERMAL GROWTH FACTOR RECEPTOR"/>
    <property type="match status" value="1"/>
</dbReference>
<dbReference type="PANTHER" id="PTHR24416">
    <property type="entry name" value="TYROSINE-PROTEIN KINASE RECEPTOR"/>
    <property type="match status" value="1"/>
</dbReference>
<dbReference type="Pfam" id="PF00757">
    <property type="entry name" value="Furin-like"/>
    <property type="match status" value="1"/>
</dbReference>
<dbReference type="Pfam" id="PF14843">
    <property type="entry name" value="GF_recep_IV"/>
    <property type="match status" value="1"/>
</dbReference>
<dbReference type="Pfam" id="PF07714">
    <property type="entry name" value="PK_Tyr_Ser-Thr"/>
    <property type="match status" value="1"/>
</dbReference>
<dbReference type="Pfam" id="PF01030">
    <property type="entry name" value="Recep_L_domain"/>
    <property type="match status" value="2"/>
</dbReference>
<dbReference type="Pfam" id="PF21314">
    <property type="entry name" value="TM_ErbB1"/>
    <property type="match status" value="1"/>
</dbReference>
<dbReference type="PIRSF" id="PIRSF000619">
    <property type="entry name" value="TyrPK_EGF-R"/>
    <property type="match status" value="1"/>
</dbReference>
<dbReference type="PRINTS" id="PR00109">
    <property type="entry name" value="TYRKINASE"/>
</dbReference>
<dbReference type="SMART" id="SM00261">
    <property type="entry name" value="FU"/>
    <property type="match status" value="4"/>
</dbReference>
<dbReference type="SMART" id="SM00219">
    <property type="entry name" value="TyrKc"/>
    <property type="match status" value="1"/>
</dbReference>
<dbReference type="SUPFAM" id="SSF57184">
    <property type="entry name" value="Growth factor receptor domain"/>
    <property type="match status" value="2"/>
</dbReference>
<dbReference type="SUPFAM" id="SSF52058">
    <property type="entry name" value="L domain-like"/>
    <property type="match status" value="2"/>
</dbReference>
<dbReference type="SUPFAM" id="SSF56112">
    <property type="entry name" value="Protein kinase-like (PK-like)"/>
    <property type="match status" value="1"/>
</dbReference>
<dbReference type="PROSITE" id="PS00107">
    <property type="entry name" value="PROTEIN_KINASE_ATP"/>
    <property type="match status" value="1"/>
</dbReference>
<dbReference type="PROSITE" id="PS50011">
    <property type="entry name" value="PROTEIN_KINASE_DOM"/>
    <property type="match status" value="1"/>
</dbReference>
<dbReference type="PROSITE" id="PS00109">
    <property type="entry name" value="PROTEIN_KINASE_TYR"/>
    <property type="match status" value="1"/>
</dbReference>
<accession>Q01279</accession>
<name>EGFR_MOUSE</name>
<organism>
    <name type="scientific">Mus musculus</name>
    <name type="common">Mouse</name>
    <dbReference type="NCBI Taxonomy" id="10090"/>
    <lineage>
        <taxon>Eukaryota</taxon>
        <taxon>Metazoa</taxon>
        <taxon>Chordata</taxon>
        <taxon>Craniata</taxon>
        <taxon>Vertebrata</taxon>
        <taxon>Euteleostomi</taxon>
        <taxon>Mammalia</taxon>
        <taxon>Eutheria</taxon>
        <taxon>Euarchontoglires</taxon>
        <taxon>Glires</taxon>
        <taxon>Rodentia</taxon>
        <taxon>Myomorpha</taxon>
        <taxon>Muroidea</taxon>
        <taxon>Muridae</taxon>
        <taxon>Murinae</taxon>
        <taxon>Mus</taxon>
        <taxon>Mus</taxon>
    </lineage>
</organism>
<gene>
    <name evidence="22" type="primary">Egfr</name>
</gene>
<reference key="1">
    <citation type="journal article" date="1992" name="Oncogene">
        <title>Promoter region of the murine fibroblast growth factor receptor 2 (bek/KGFR) gene.</title>
        <authorList>
            <person name="Avivi A."/>
            <person name="Skorecki K."/>
            <person name="Yayon A."/>
            <person name="Givol D."/>
        </authorList>
    </citation>
    <scope>NUCLEOTIDE SEQUENCE [MRNA]</scope>
    <source>
        <strain>BALB/cJ</strain>
        <tissue>Liver</tissue>
    </source>
</reference>
<reference key="2">
    <citation type="journal article" date="1993" name="Proc. Natl. Acad. Sci. U.S.A.">
        <title>Expression of the epidermal growth factor receptor gene is regulated in mouse blastocysts during delayed implantation.</title>
        <authorList>
            <person name="Paria B.C."/>
            <person name="Das S.K."/>
            <person name="Andrews G.K."/>
            <person name="Dey S.K."/>
        </authorList>
    </citation>
    <scope>NUCLEOTIDE SEQUENCE [MRNA]</scope>
    <source>
        <strain>BALB/cJ</strain>
        <strain>CD-1</strain>
        <tissue>Decidua</tissue>
        <tissue>Liver</tissue>
    </source>
</reference>
<reference key="3">
    <citation type="submission" date="1994-04" db="EMBL/GenBank/DDBJ databases">
        <authorList>
            <person name="Hibbs M.L."/>
        </authorList>
    </citation>
    <scope>NUCLEOTIDE SEQUENCE [MRNA]</scope>
    <source>
        <strain>BALB/cJ</strain>
        <tissue>Liver</tissue>
    </source>
</reference>
<reference key="4">
    <citation type="journal article" date="1994" name="Genes Dev.">
        <title>The mouse waved-2 phenotype results from a point mutation in the EGF receptor tyrosine kinase.</title>
        <authorList>
            <person name="Luetteke N.C."/>
            <person name="Phillips H.K."/>
            <person name="Qiu T.H."/>
            <person name="Copeland N.G."/>
            <person name="Earp H.S."/>
            <person name="Jenkins N.A."/>
            <person name="Lee D.C."/>
        </authorList>
    </citation>
    <scope>NUCLEOTIDE SEQUENCE [MRNA]</scope>
    <source>
        <strain>B6/C3</strain>
        <tissue>Liver</tissue>
    </source>
</reference>
<reference key="5">
    <citation type="journal article" date="1991" name="Oncogene">
        <title>Comparison of EGF receptor sequences as a guide to study the ligand binding site.</title>
        <authorList>
            <person name="Avivi A."/>
            <person name="Lax I."/>
            <person name="Ullrich A."/>
            <person name="Schlessinger J."/>
            <person name="Givol D."/>
            <person name="Morse B."/>
        </authorList>
    </citation>
    <scope>NUCLEOTIDE SEQUENCE [MRNA] OF 1-714</scope>
    <source>
        <tissue>Brain</tissue>
    </source>
</reference>
<reference key="6">
    <citation type="submission" date="1992-06" db="EMBL/GenBank/DDBJ databases">
        <authorList>
            <person name="Eisinger D.P."/>
            <person name="Serrero G."/>
        </authorList>
    </citation>
    <scope>NUCLEOTIDE SEQUENCE [MRNA] OF 969-1117</scope>
    <source>
        <strain>C3H/HeJ</strain>
    </source>
</reference>
<reference key="7">
    <citation type="journal article" date="1993" name="EMBO J.">
        <title>Eps8, a substrate for the epidermal growth factor receptor kinase, enhances EGF-dependent mitogenic signals.</title>
        <authorList>
            <person name="Fazioli F."/>
            <person name="Minichiello L."/>
            <person name="Matoska V."/>
            <person name="Castagnino P."/>
            <person name="Miki T."/>
            <person name="Wong W.T."/>
            <person name="di Fiore P.P."/>
        </authorList>
    </citation>
    <scope>FUNCTION IN CELL GROWTH</scope>
    <scope>FUNCTION IN PHOSPHORYLATION OF EPS8</scope>
    <scope>INTERACTION WITH EPS8</scope>
</reference>
<reference key="8">
    <citation type="journal article" date="1995" name="Nature">
        <title>Epithelial immaturity and multiorgan failure in mice lacking epidermal growth factor receptor.</title>
        <authorList>
            <person name="Miettinen P.J."/>
            <person name="Berger J.E."/>
            <person name="Meneses J."/>
            <person name="Phung Y."/>
            <person name="Pedersen R.A."/>
            <person name="Werb Z."/>
            <person name="Derynck R."/>
        </authorList>
    </citation>
    <scope>DISRUPTION PHENOTYPE</scope>
</reference>
<reference key="9">
    <citation type="journal article" date="1995" name="Science">
        <title>Targeted disruption of mouse EGF receptor: effect of genetic background on mutant phenotype.</title>
        <authorList>
            <person name="Threadgill D.W."/>
            <person name="Dlugosz A.A."/>
            <person name="Hansen L.A."/>
            <person name="Tennenbaum T."/>
            <person name="Lichti U."/>
            <person name="Yee D."/>
            <person name="LaMantia C."/>
            <person name="Mourton T."/>
            <person name="Herrup K."/>
            <person name="Harris R.C."/>
        </authorList>
    </citation>
    <scope>DISRUPTION PHENOTYPE</scope>
</reference>
<reference key="10">
    <citation type="journal article" date="1995" name="Science">
        <title>Strain-dependent epithelial defects in mice lacking the EGF receptor.</title>
        <authorList>
            <person name="Sibilia M."/>
            <person name="Wagner E.F."/>
        </authorList>
    </citation>
    <scope>DISRUPTION PHENOTYPE</scope>
</reference>
<reference key="11">
    <citation type="journal article" date="2000" name="J. Cell Biol.">
        <title>Tyrosine phosphorylation of Eps15 is required for ligand-regulated, but not constitutive, endocytosis.</title>
        <authorList>
            <person name="Confalonieri S."/>
            <person name="Salcini A.E."/>
            <person name="Puri C."/>
            <person name="Tacchetti C."/>
            <person name="Di Fiore P.P."/>
        </authorList>
    </citation>
    <scope>FUNCTION IN PHOSPHORYLATION OF EPS15</scope>
    <scope>ACTIVITY REGULATION</scope>
    <scope>ENDOCYTOSIS</scope>
</reference>
<reference key="12">
    <citation type="journal article" date="2006" name="J. Proteome Res.">
        <title>Proteome-wide characterization of N-glycosylation events by diagonal chromatography.</title>
        <authorList>
            <person name="Ghesquiere B."/>
            <person name="Van Damme J."/>
            <person name="Martens L."/>
            <person name="Vandekerckhove J."/>
            <person name="Gevaert K."/>
        </authorList>
    </citation>
    <scope>GLYCOSYLATION [LARGE SCALE ANALYSIS] AT ASN-352 AND ASN-444</scope>
    <source>
        <strain>C57BL/6J</strain>
        <tissue>Plasma</tissue>
    </source>
</reference>
<reference key="13">
    <citation type="journal article" date="2006" name="Traffic">
        <title>Syntaxin 9 is enriched in skin hair follicle epithelium and interacts with the epidermal growth factor receptor.</title>
        <authorList>
            <person name="Wang Y."/>
            <person name="Foo L.Y."/>
            <person name="Guo K."/>
            <person name="Gan B.Q."/>
            <person name="Zeng Q."/>
            <person name="Hong W."/>
            <person name="Tang B.L."/>
        </authorList>
    </citation>
    <scope>INTERACTION WITH STX19</scope>
</reference>
<reference key="14">
    <citation type="journal article" date="2007" name="Cancer Res.">
        <title>The phosphoinositide kinase PIKfyve mediates epidermal growth factor receptor trafficking to the nucleus.</title>
        <authorList>
            <person name="Kim J."/>
            <person name="Jahng W.J."/>
            <person name="Di Vizio D."/>
            <person name="Lee J.S."/>
            <person name="Jhaveri R."/>
            <person name="Rubin M.A."/>
            <person name="Shisheva A."/>
            <person name="Freeman M.R."/>
        </authorList>
    </citation>
    <scope>INTERACTION WITH PIKFYVE</scope>
</reference>
<reference key="15">
    <citation type="journal article" date="2007" name="J. Proteome Res.">
        <title>Enhanced analysis of the mouse plasma proteome using cysteine-containing tryptic glycopeptides.</title>
        <authorList>
            <person name="Bernhard O.K."/>
            <person name="Kapp E.A."/>
            <person name="Simpson R.J."/>
        </authorList>
    </citation>
    <scope>GLYCOSYLATION [LARGE SCALE ANALYSIS] AT ASN-175</scope>
    <source>
        <strain>C57BL/6J</strain>
        <tissue>Plasma</tissue>
    </source>
</reference>
<reference key="16">
    <citation type="journal article" date="2007" name="Proc. Natl. Acad. Sci. U.S.A.">
        <title>Large-scale phosphorylation analysis of mouse liver.</title>
        <authorList>
            <person name="Villen J."/>
            <person name="Beausoleil S.A."/>
            <person name="Gerber S.A."/>
            <person name="Gygi S.P."/>
        </authorList>
    </citation>
    <scope>PHOSPHORYLATION [LARGE SCALE ANALYSIS] AT TYR-1197</scope>
    <scope>IDENTIFICATION BY MASS SPECTROMETRY [LARGE SCALE ANALYSIS]</scope>
    <source>
        <tissue>Liver</tissue>
    </source>
</reference>
<reference key="17">
    <citation type="journal article" date="2010" name="Cell">
        <title>A tissue-specific atlas of mouse protein phosphorylation and expression.</title>
        <authorList>
            <person name="Huttlin E.L."/>
            <person name="Jedrychowski M.P."/>
            <person name="Elias J.E."/>
            <person name="Goswami T."/>
            <person name="Rad R."/>
            <person name="Beausoleil S.A."/>
            <person name="Villen J."/>
            <person name="Haas W."/>
            <person name="Sowa M.E."/>
            <person name="Gygi S.P."/>
        </authorList>
    </citation>
    <scope>IDENTIFICATION BY MASS SPECTROMETRY [LARGE SCALE ANALYSIS]</scope>
    <source>
        <tissue>Brain</tissue>
        <tissue>Brown adipose tissue</tissue>
        <tissue>Heart</tissue>
        <tissue>Kidney</tissue>
        <tissue>Liver</tissue>
        <tissue>Lung</tissue>
        <tissue>Pancreas</tissue>
        <tissue>Spleen</tissue>
        <tissue>Testis</tissue>
    </source>
</reference>
<reference key="18">
    <citation type="journal article" date="2010" name="Nucleic Acids Res.">
        <title>A novel role of CPEB3 in regulating EGFR gene transcription via association with Stat5b in neurons.</title>
        <authorList>
            <person name="Peng S.C."/>
            <person name="Lai Y.T."/>
            <person name="Huang H.Y."/>
            <person name="Huang H.D."/>
            <person name="Huang Y.S."/>
        </authorList>
    </citation>
    <scope>FUNCTION</scope>
</reference>
<reference key="19">
    <citation type="journal article" date="2013" name="J. Cell Sci.">
        <title>The E3 ubiquitin ligases RNF126 and Rabring7 regulate endosomal sorting of the epidermal growth factor receptor.</title>
        <authorList>
            <person name="Smith C.J."/>
            <person name="Berry D.M."/>
            <person name="McGlade C.J."/>
        </authorList>
    </citation>
    <scope>UBIQUITINATION BY RNF115 AND RNF126</scope>
    <scope>INTERACTION WITH RNF115 AND RNF126</scope>
</reference>
<reference key="20">
    <citation type="journal article" date="2015" name="Cancer Res.">
        <title>Lung tumor suppressor GPRC5A binds EGFR and restrains its effector signaling.</title>
        <authorList>
            <person name="Zhong S."/>
            <person name="Yin H."/>
            <person name="Liao Y."/>
            <person name="Yao F."/>
            <person name="Li Q."/>
            <person name="Zhang J."/>
            <person name="Jiao H."/>
            <person name="Zhao Y."/>
            <person name="Xu D."/>
            <person name="Liu S."/>
            <person name="Song H."/>
            <person name="Gao Y."/>
            <person name="Liu J."/>
            <person name="Ma L."/>
            <person name="Pang Z."/>
            <person name="Yang R."/>
            <person name="Ding C."/>
            <person name="Sun B."/>
            <person name="Lin X."/>
            <person name="Ye X."/>
            <person name="Guo W."/>
            <person name="Han B."/>
            <person name="Zhou B.P."/>
            <person name="Chin Y.E."/>
            <person name="Deng J."/>
        </authorList>
    </citation>
    <scope>INTERACTION WITH GPRC5A</scope>
</reference>
<reference key="21">
    <citation type="journal article" date="2020" name="Sci. Adv.">
        <title>The deubiquitinase UCHL1 regulates cardiac hypertrophy by stabilizing epidermal growth factor receptor.</title>
        <authorList>
            <person name="Bi H.L."/>
            <person name="Zhang X.L."/>
            <person name="Zhang Y.L."/>
            <person name="Xie X."/>
            <person name="Xia Y.L."/>
            <person name="Du J."/>
            <person name="Li H.H."/>
        </authorList>
    </citation>
    <scope>DEUBIQUITINATION BY UCHL1</scope>
</reference>
<reference key="22">
    <citation type="journal article" date="2022" name="Proc. Natl. Acad. Sci. U.S.A.">
        <title>A peptide toxin in ant venom mimics vertebrate EGF-like hormones to cause long-lasting hypersensitivity in mammals.</title>
        <authorList>
            <person name="Eagles D.A."/>
            <person name="Saez N.J."/>
            <person name="Krishnarjuna B."/>
            <person name="Bradford J.J."/>
            <person name="Chin Y.K."/>
            <person name="Starobova H."/>
            <person name="Mueller A."/>
            <person name="Reichelt M.E."/>
            <person name="Undheim E.A.B."/>
            <person name="Norton R.S."/>
            <person name="Thomas W.G."/>
            <person name="Vetter I."/>
            <person name="King G.F."/>
            <person name="Robinson S.D."/>
        </authorList>
    </citation>
    <scope>FUNCTION</scope>
</reference>
<comment type="function">
    <text evidence="2 7 12 16 20">Receptor tyrosine kinase binding ligands of the EGF family and activating several signaling cascades to convert extracellular cues into appropriate cellular responses (PubMed:8404850). Known ligands include EGF, TGFA/TGF-alpha, AREG, epigen/EPGN, BTC/betacellulin, epiregulin/EREG and HBEGF/heparin-binding EGF. Ligand binding triggers receptor homo- and/or heterodimerization and autophosphorylation on key cytoplasmic residues. The phosphorylated receptor recruits adapter proteins like GRB2 which in turn activates complex downstream signaling cascades. Activates at least 4 major downstream signaling cascades including the RAS-RAF-MEK-ERK, PI3 kinase-AKT, PLCgamma-PKC and STATs modules. May also activate the NF-kappa-B signaling cascade. Also directly phosphorylates other proteins like RGS16, activating its GTPase activity and probably coupling the EGF receptor signaling to the G protein-coupled receptor signaling. Also phosphorylates MUC1 and increases its interaction with SRC and CTNNB1/beta-catenin (By similarity). Positively regulates cell migration via interaction with CCDC88A/GIV which retains EGFR at the cell membrane following ligand stimulation, promoting EGFR signaling which triggers cell migration (By similarity). Plays a role in enhancing learning and memory performance (PubMed:20639532). Plays a role in mammalian pain signaling (long-lasting hypersensitivity) (PubMed:35131940).</text>
</comment>
<comment type="catalytic activity">
    <reaction evidence="5">
        <text>L-tyrosyl-[protein] + ATP = O-phospho-L-tyrosyl-[protein] + ADP + H(+)</text>
        <dbReference type="Rhea" id="RHEA:10596"/>
        <dbReference type="Rhea" id="RHEA-COMP:10136"/>
        <dbReference type="Rhea" id="RHEA-COMP:20101"/>
        <dbReference type="ChEBI" id="CHEBI:15378"/>
        <dbReference type="ChEBI" id="CHEBI:30616"/>
        <dbReference type="ChEBI" id="CHEBI:46858"/>
        <dbReference type="ChEBI" id="CHEBI:61978"/>
        <dbReference type="ChEBI" id="CHEBI:456216"/>
        <dbReference type="EC" id="2.7.10.1"/>
    </reaction>
</comment>
<comment type="activity regulation">
    <text evidence="7">Endocytosis and inhibition of the activated EGFR by phosphatases like PTPRJ and PTPRK constitute immediate regulatory mechanisms. Upon EGF-binding phosphorylates EPS15 that regulates EGFR endocytosis and activity. Moreover, inducible feedback inhibitors including LRIG1, SOCS4, SOCS5 and ERRFI1 constitute alternative regulatory mechanisms for the EGFR signaling.</text>
</comment>
<comment type="subunit">
    <text evidence="2 8 11 13 14 20">Binding of the ligand triggers homo- and/or heterodimerization of the receptor triggering its autophosphorylation. Heterodimer with ERBB2. Forms a complex with CCDC88A/GIV (via SH2-like region) and GNAI3 which leads to enhanced EGFR signaling and triggering of cell migration; binding of CCDC88A requires autophosphorylation of the EGFR C-terminal region, and ligand stimulation is required for recruitment of GNAI3 to the complex (By similarity). Interacts with ERRFI1; inhibits dimerization of the kinase domain and autophosphorylation. Part of a complex with ERBB2 and either PIK3C2A or PIK3C2B. Interacts with GRB2; an adapter protein coupling the receptor to downstream signaling pathways. Interacts with GAB2; involved in signaling downstream of EGFR. Interacts with STAT3; mediates EGFR downstream signaling in cell proliferation. Interacts with RIPK1; involved in NF-kappa-B activation. Interacts (autophosphorylated) with CBL, CBLB and CBLC; involved in EGFR ubiquitination and regulation; interaction with CBL is reduced in the presence of tensin TNS4. Interacts with SOCS5; regulates EGFR degradation through ELOC- and ELOB-mediated ubiquitination and proteasomal degradation. Interacts with PRMT5; methylates EGFR and enhances interaction with PTPN6. Interacts (phosphorylated) with PTPN6; inhibits EGFR-dependent activation of MAPK/ERK. Interacts with COPG1; essential for regulation of EGF-dependent nuclear transport of EGFR by retrograde trafficking from the Golgi to the ER. Interacts with TNK2; this interaction is dependent on EGF stimulation and kinase activity of EGFR. Interacts with PCNA; positively regulates PCNA. Interacts with PELP1. Interacts with MUC1. Interacts with AP2M1. Interacts with FER. Interacts (via SH2 domains) with GRB2, NCK1 and NCK2. Interacts with EPS8; mediates EPS8 phosphorylation. Interacts with ATXN2. Interacts with GAREM1. Interacts (ubiquitinated) with ANKRD13A/B/D; the interaction is direct and may regulate EGFR internalization after EGF stimulation. Interacts with GPER1; the interaction occurs in an estrogen-dependent manner. Interacts (via C-terminal cytoplasmic kinase domain) with ZPR1 (via zinc fingers). Interacts with RNF115 and RNF126. Interacts with GPRC5A (via its transmembrane domain) (PubMed:25744720). Interacts with FAM83B; positively regulates EGFR inducing its autophosphorylation in absence of stimulation by EGF (By similarity). Interacts with LAPTM4B; positively correlates with EGFR activation (By similarity). Interacts with STX19 (PubMed:16420529). Interacts with CD44 (By similarity). Interacts with PGRMC1; the interaction requires PGRMC1 homodimerization (By similarity). Interacts with PIKFYVE (PubMed:17909029). Interacts with NEU3. Interacts with TRAF4. Interacts with the ant venom OMEGA-myrmeciitoxin(02)-Mg1a (PubMed:35131940). Interacts with CD82; this interaction facilitates ligand-induced endocytosis of the receptor and its subsequent desensitization (By similarity).</text>
</comment>
<comment type="interaction">
    <interactant intactId="EBI-6296235">
        <id>Q01279</id>
    </interactant>
    <interactant intactId="EBI-640919">
        <id>P22682</id>
        <label>Cbl</label>
    </interactant>
    <organismsDiffer>false</organismsDiffer>
    <experiments>2</experiments>
</comment>
<comment type="interaction">
    <interactant intactId="EBI-6296235">
        <id>Q01279</id>
    </interactant>
    <interactant intactId="EBI-644267">
        <id>P32883</id>
        <label>Kras</label>
    </interactant>
    <organismsDiffer>false</organismsDiffer>
    <experiments>3</experiments>
</comment>
<comment type="interaction">
    <interactant intactId="EBI-6296235">
        <id>Q01279</id>
    </interactant>
    <interactant intactId="EBI-1646426">
        <id>Q15109</id>
        <label>AGER</label>
    </interactant>
    <organismsDiffer>true</organismsDiffer>
    <experiments>2</experiments>
</comment>
<comment type="interaction">
    <interactant intactId="EBI-6296235">
        <id>Q01279</id>
    </interactant>
    <interactant intactId="EBI-640857">
        <id>P01133</id>
        <label>EGF</label>
    </interactant>
    <organismsDiffer>true</organismsDiffer>
    <experiments>3</experiments>
</comment>
<comment type="subcellular location">
    <subcellularLocation>
        <location evidence="2">Cell membrane</location>
        <topology evidence="2">Single-pass type I membrane protein</topology>
    </subcellularLocation>
    <subcellularLocation>
        <location evidence="2">Endoplasmic reticulum membrane</location>
        <topology evidence="2">Single-pass type I membrane protein</topology>
    </subcellularLocation>
    <subcellularLocation>
        <location evidence="2">Golgi apparatus membrane</location>
        <topology evidence="2">Single-pass type I membrane protein</topology>
    </subcellularLocation>
    <subcellularLocation>
        <location evidence="2">Nucleus membrane</location>
        <topology evidence="2">Single-pass type I membrane protein</topology>
    </subcellularLocation>
    <subcellularLocation>
        <location evidence="2">Endosome</location>
    </subcellularLocation>
    <subcellularLocation>
        <location evidence="2">Endosome membrane</location>
    </subcellularLocation>
    <subcellularLocation>
        <location evidence="2">Nucleus</location>
    </subcellularLocation>
    <text evidence="2">In response to EGF, translocated from the cell membrane to the nucleus via Golgi and ER. Endocytosed upon activation by ligand. Colocalized with GPER1 in the nucleus of estrogen agonist-induced cancer-associated fibroblasts (CAF).</text>
</comment>
<comment type="PTM">
    <text evidence="2 13 15">Monoubiquitinated and polyubiquitinated upon EGF stimulation; which does not affect tyrosine kinase activity or signaling capacity but may play a role in lysosomal targeting. Polyubiquitin linkage is mainly through 'Lys-63', but linkage through 'Lys-48', 'Lys-11' and 'Lys-29' also occurs. Deubiquitinated by OTUD7B, preventing degradation (By similarity). Ubiquitinated by RNF115 and RNF126. Ubiquitinated by ZNRF1 or CBL at different lysines in response to EGF stimulation; leading to recruitment of the ESCRT machinery and subsequent degradation in the lysosomes (By similarity). Deubiquitinated by UCHL1 leading to the inhibition of its degradation (PubMed:32494592).</text>
</comment>
<comment type="PTM">
    <text evidence="2">Phosphorylated on Tyr residues in response to EGF. Phosphorylation at Ser-697 is partial and occurs only if Thr-695 is phosphorylated. Phosphorylation at Thr-680 and Thr-695 by PRKD1 inhibits EGF-induced MAPK8/JNK1 activation. Dephosphorylation by PTPRJ prevents endocytosis and stabilizes the receptor at the plasma membrane. Autophosphorylation at Tyr-1199 is stimulated by methylation at Arg-1199 and enhances interaction with PTPN6. Autophosphorylation at Tyr-1092 and/or Tyr-1110 recruits STAT3. Dephosphorylated by PTPN1 and PTPN2.</text>
</comment>
<comment type="PTM">
    <text evidence="2">Palmitoylated on Cys residues by ZDHHC20. Palmitoylation inhibits internalization after ligand binding, and increases the persistence of tyrosine-phosphorylated EGFR at the cell membrane. Palmitoylation increases the amplitude and duration of EGFR signaling.</text>
</comment>
<comment type="PTM">
    <text evidence="2">Methylated. Methylation at Arg-1199 by PRMT5 stimulates phosphorylation at Tyr-1197.</text>
</comment>
<comment type="disruption phenotype">
    <text evidence="17 18 19">Mice are growth retarded and die at different stages of development depending on their genetic background. Embryonic death is due to placental defects. Mice surviving until birth or later display brain, bone, heart and various epithelial development defects in several organs, including skin, lung and gastrointestinal tract.</text>
</comment>
<comment type="similarity">
    <text evidence="4">Belongs to the protein kinase superfamily. Tyr protein kinase family. EGF receptor subfamily.</text>
</comment>
<keyword id="KW-0067">ATP-binding</keyword>
<keyword id="KW-1003">Cell membrane</keyword>
<keyword id="KW-0217">Developmental protein</keyword>
<keyword id="KW-1015">Disulfide bond</keyword>
<keyword id="KW-0256">Endoplasmic reticulum</keyword>
<keyword id="KW-0967">Endosome</keyword>
<keyword id="KW-0325">Glycoprotein</keyword>
<keyword id="KW-0333">Golgi apparatus</keyword>
<keyword id="KW-0379">Hydroxylation</keyword>
<keyword id="KW-1017">Isopeptide bond</keyword>
<keyword id="KW-0418">Kinase</keyword>
<keyword id="KW-0449">Lipoprotein</keyword>
<keyword id="KW-0472">Membrane</keyword>
<keyword id="KW-0488">Methylation</keyword>
<keyword id="KW-0547">Nucleotide-binding</keyword>
<keyword id="KW-0539">Nucleus</keyword>
<keyword id="KW-0564">Palmitate</keyword>
<keyword id="KW-0597">Phosphoprotein</keyword>
<keyword id="KW-0675">Receptor</keyword>
<keyword id="KW-1185">Reference proteome</keyword>
<keyword id="KW-0677">Repeat</keyword>
<keyword id="KW-0732">Signal</keyword>
<keyword id="KW-0808">Transferase</keyword>
<keyword id="KW-0812">Transmembrane</keyword>
<keyword id="KW-1133">Transmembrane helix</keyword>
<keyword id="KW-0829">Tyrosine-protein kinase</keyword>
<keyword id="KW-0832">Ubl conjugation</keyword>
<feature type="signal peptide" evidence="2">
    <location>
        <begin position="1"/>
        <end position="24"/>
    </location>
</feature>
<feature type="chain" id="PRO_0000016666" description="Epidermal growth factor receptor">
    <location>
        <begin position="25"/>
        <end position="1210"/>
    </location>
</feature>
<feature type="topological domain" description="Extracellular" evidence="3">
    <location>
        <begin position="25"/>
        <end position="647"/>
    </location>
</feature>
<feature type="transmembrane region" description="Helical" evidence="3">
    <location>
        <begin position="648"/>
        <end position="670"/>
    </location>
</feature>
<feature type="topological domain" description="Cytoplasmic" evidence="3">
    <location>
        <begin position="671"/>
        <end position="1210"/>
    </location>
</feature>
<feature type="repeat" description="Approximate">
    <location>
        <begin position="75"/>
        <end position="300"/>
    </location>
</feature>
<feature type="repeat" description="Approximate">
    <location>
        <begin position="390"/>
        <end position="600"/>
    </location>
</feature>
<feature type="domain" description="Protein kinase" evidence="4">
    <location>
        <begin position="714"/>
        <end position="981"/>
    </location>
</feature>
<feature type="region of interest" description="Important for dimerization, phosphorylation and activation" evidence="1">
    <location>
        <begin position="690"/>
        <end position="706"/>
    </location>
</feature>
<feature type="region of interest" description="Disordered" evidence="6">
    <location>
        <begin position="1113"/>
        <end position="1137"/>
    </location>
</feature>
<feature type="compositionally biased region" description="Polar residues" evidence="6">
    <location>
        <begin position="1127"/>
        <end position="1137"/>
    </location>
</feature>
<feature type="active site" description="Proton acceptor" evidence="4 5">
    <location>
        <position position="839"/>
    </location>
</feature>
<feature type="binding site" evidence="4">
    <location>
        <begin position="720"/>
        <end position="728"/>
    </location>
    <ligand>
        <name>ATP</name>
        <dbReference type="ChEBI" id="CHEBI:30616"/>
    </ligand>
</feature>
<feature type="binding site" evidence="4">
    <location>
        <position position="747"/>
    </location>
    <ligand>
        <name>ATP</name>
        <dbReference type="ChEBI" id="CHEBI:30616"/>
    </ligand>
</feature>
<feature type="binding site" evidence="4">
    <location>
        <begin position="792"/>
        <end position="793"/>
    </location>
    <ligand>
        <name>ATP</name>
        <dbReference type="ChEBI" id="CHEBI:30616"/>
    </ligand>
</feature>
<feature type="binding site" evidence="4">
    <location>
        <position position="857"/>
    </location>
    <ligand>
        <name>ATP</name>
        <dbReference type="ChEBI" id="CHEBI:30616"/>
    </ligand>
</feature>
<feature type="site" description="Important for interaction with PIK3C2B" evidence="1">
    <location>
        <position position="1018"/>
    </location>
</feature>
<feature type="modified residue" description="Phosphoserine" evidence="2">
    <location>
        <position position="229"/>
    </location>
</feature>
<feature type="modified residue" description="Phosphothreonine; by PKC and PKD/PRKD1" evidence="2">
    <location>
        <position position="680"/>
    </location>
</feature>
<feature type="modified residue" description="Phosphothreonine; by PKD/PRKD1" evidence="2">
    <location>
        <position position="695"/>
    </location>
</feature>
<feature type="modified residue" description="Phosphoserine" evidence="2">
    <location>
        <position position="697"/>
    </location>
</feature>
<feature type="modified residue" description="N6-(2-hydroxyisobutyryl)lysine" evidence="2">
    <location>
        <position position="747"/>
    </location>
</feature>
<feature type="modified residue" description="Phosphotyrosine" evidence="2">
    <location>
        <position position="871"/>
    </location>
</feature>
<feature type="modified residue" description="Phosphoserine" evidence="2">
    <location>
        <position position="993"/>
    </location>
</feature>
<feature type="modified residue" description="Phosphoserine" evidence="2">
    <location>
        <position position="997"/>
    </location>
</feature>
<feature type="modified residue" description="Phosphotyrosine; by autocatalysis" evidence="2">
    <location>
        <position position="1000"/>
    </location>
</feature>
<feature type="modified residue" description="Phosphotyrosine; by autocatalysis" evidence="2">
    <location>
        <position position="1018"/>
    </location>
</feature>
<feature type="modified residue" description="Phosphoserine" evidence="2">
    <location>
        <position position="1028"/>
    </location>
</feature>
<feature type="modified residue" description="Phosphoserine" evidence="2">
    <location>
        <position position="1041"/>
    </location>
</feature>
<feature type="modified residue" description="Phosphothreonine" evidence="2">
    <location>
        <position position="1043"/>
    </location>
</feature>
<feature type="modified residue" description="Phosphoserine" evidence="2">
    <location>
        <position position="1044"/>
    </location>
</feature>
<feature type="modified residue" description="Phosphotyrosine" evidence="2">
    <location>
        <position position="1069"/>
    </location>
</feature>
<feature type="modified residue" description="Phosphoserine" evidence="2">
    <location>
        <position position="1070"/>
    </location>
</feature>
<feature type="modified residue" description="Phosphoserine" evidence="2">
    <location>
        <position position="1071"/>
    </location>
</feature>
<feature type="modified residue" description="Phosphotyrosine; by autocatalysis" evidence="2">
    <location>
        <position position="1092"/>
    </location>
</feature>
<feature type="modified residue" description="Phosphotyrosine; by autocatalysis" evidence="2">
    <location>
        <position position="1110"/>
    </location>
</feature>
<feature type="modified residue" description="Phosphoserine" evidence="2">
    <location>
        <position position="1166"/>
    </location>
</feature>
<feature type="modified residue" description="Phosphotyrosine; by autocatalysis" evidence="2">
    <location>
        <position position="1172"/>
    </location>
</feature>
<feature type="modified residue" description="Phosphotyrosine" evidence="23">
    <location>
        <position position="1197"/>
    </location>
</feature>
<feature type="modified residue" description="Omega-N-methylarginine" evidence="2">
    <location>
        <position position="1199"/>
    </location>
</feature>
<feature type="lipid moiety-binding region" description="S-palmitoyl cysteine" evidence="2">
    <location>
        <position position="1051"/>
    </location>
</feature>
<feature type="lipid moiety-binding region" description="S-palmitoyl cysteine" evidence="2">
    <location>
        <position position="1146"/>
    </location>
</feature>
<feature type="glycosylation site" description="N-linked (GlcNAc...) asparagine" evidence="3">
    <location>
        <position position="128"/>
    </location>
</feature>
<feature type="glycosylation site" description="N-linked (GlcNAc...) asparagine" evidence="10">
    <location>
        <position position="175"/>
    </location>
</feature>
<feature type="glycosylation site" description="N-linked (GlcNAc...) asparagine" evidence="3">
    <location>
        <position position="196"/>
    </location>
</feature>
<feature type="glycosylation site" description="N-linked (GlcNAc...) asparagine" evidence="9">
    <location>
        <position position="352"/>
    </location>
</feature>
<feature type="glycosylation site" description="N-linked (GlcNAc...) asparagine" evidence="3">
    <location>
        <position position="413"/>
    </location>
</feature>
<feature type="glycosylation site" description="N-linked (GlcNAc...) asparagine" evidence="9">
    <location>
        <position position="444"/>
    </location>
</feature>
<feature type="glycosylation site" description="N-linked (GlcNAc...) asparagine" evidence="3">
    <location>
        <position position="528"/>
    </location>
</feature>
<feature type="glycosylation site" description="N-linked (GlcNAc...) asparagine" evidence="3">
    <location>
        <position position="568"/>
    </location>
</feature>
<feature type="glycosylation site" description="N-linked (GlcNAc...) asparagine" evidence="3">
    <location>
        <position position="603"/>
    </location>
</feature>
<feature type="glycosylation site" description="N-linked (GlcNAc...) asparagine" evidence="3">
    <location>
        <position position="623"/>
    </location>
</feature>
<feature type="disulfide bond" evidence="2">
    <location>
        <begin position="31"/>
        <end position="58"/>
    </location>
</feature>
<feature type="disulfide bond" evidence="2">
    <location>
        <begin position="157"/>
        <end position="187"/>
    </location>
</feature>
<feature type="disulfide bond" evidence="2">
    <location>
        <begin position="190"/>
        <end position="199"/>
    </location>
</feature>
<feature type="disulfide bond" evidence="2">
    <location>
        <begin position="194"/>
        <end position="207"/>
    </location>
</feature>
<feature type="disulfide bond" evidence="2">
    <location>
        <begin position="215"/>
        <end position="223"/>
    </location>
</feature>
<feature type="disulfide bond" evidence="2">
    <location>
        <begin position="219"/>
        <end position="231"/>
    </location>
</feature>
<feature type="disulfide bond" evidence="2">
    <location>
        <begin position="232"/>
        <end position="240"/>
    </location>
</feature>
<feature type="disulfide bond" evidence="2">
    <location>
        <begin position="236"/>
        <end position="248"/>
    </location>
</feature>
<feature type="disulfide bond" evidence="2">
    <location>
        <begin position="251"/>
        <end position="260"/>
    </location>
</feature>
<feature type="disulfide bond" evidence="2">
    <location>
        <begin position="264"/>
        <end position="291"/>
    </location>
</feature>
<feature type="disulfide bond" evidence="2">
    <location>
        <begin position="295"/>
        <end position="307"/>
    </location>
</feature>
<feature type="disulfide bond" evidence="2">
    <location>
        <begin position="311"/>
        <end position="326"/>
    </location>
</feature>
<feature type="disulfide bond" evidence="2">
    <location>
        <begin position="329"/>
        <end position="333"/>
    </location>
</feature>
<feature type="disulfide bond" evidence="2">
    <location>
        <begin position="337"/>
        <end position="362"/>
    </location>
</feature>
<feature type="disulfide bond" evidence="2">
    <location>
        <begin position="470"/>
        <end position="499"/>
    </location>
</feature>
<feature type="disulfide bond" evidence="2">
    <location>
        <begin position="506"/>
        <end position="515"/>
    </location>
</feature>
<feature type="disulfide bond" evidence="2">
    <location>
        <begin position="510"/>
        <end position="523"/>
    </location>
</feature>
<feature type="disulfide bond" evidence="2">
    <location>
        <begin position="526"/>
        <end position="535"/>
    </location>
</feature>
<feature type="disulfide bond" evidence="2">
    <location>
        <begin position="539"/>
        <end position="555"/>
    </location>
</feature>
<feature type="disulfide bond" evidence="2">
    <location>
        <begin position="558"/>
        <end position="571"/>
    </location>
</feature>
<feature type="disulfide bond" evidence="2">
    <location>
        <begin position="562"/>
        <end position="579"/>
    </location>
</feature>
<feature type="disulfide bond" evidence="2">
    <location>
        <begin position="582"/>
        <end position="591"/>
    </location>
</feature>
<feature type="disulfide bond" evidence="2">
    <location>
        <begin position="595"/>
        <end position="617"/>
    </location>
</feature>
<feature type="disulfide bond" evidence="2">
    <location>
        <begin position="620"/>
        <end position="628"/>
    </location>
</feature>
<feature type="disulfide bond" evidence="2">
    <location>
        <begin position="624"/>
        <end position="636"/>
    </location>
</feature>
<feature type="cross-link" description="Glycyl lysine isopeptide (Lys-Gly) (interchain with G-Cter in ubiquitin)" evidence="2">
    <location>
        <position position="718"/>
    </location>
</feature>
<feature type="cross-link" description="Glycyl lysine isopeptide (Lys-Gly) (interchain with G-Cter in ubiquitin)" evidence="2">
    <location>
        <position position="739"/>
    </location>
</feature>
<feature type="cross-link" description="Glycyl lysine isopeptide (Lys-Gly) (interchain with G-Cter in ubiquitin)" evidence="2">
    <location>
        <position position="756"/>
    </location>
</feature>
<feature type="cross-link" description="Glycyl lysine isopeptide (Lys-Gly) (interchain with G-Cter in ubiquitin)" evidence="2">
    <location>
        <position position="759"/>
    </location>
</feature>
<feature type="cross-link" description="Glycyl lysine isopeptide (Lys-Gly) (interchain with G-Cter in ubiquitin)" evidence="2">
    <location>
        <position position="869"/>
    </location>
</feature>
<feature type="cross-link" description="Glycyl lysine isopeptide (Lys-Gly) (interchain with G-Cter in ubiquitin)" evidence="2">
    <location>
        <position position="931"/>
    </location>
</feature>
<feature type="cross-link" description="Glycyl lysine isopeptide (Lys-Gly) (interchain with G-Cter in ubiquitin)" evidence="2">
    <location>
        <position position="962"/>
    </location>
</feature>
<feature type="cross-link" description="Glycyl lysine isopeptide (Lys-Gly) (interchain with G-Cter in ubiquitin)" evidence="2">
    <location>
        <position position="972"/>
    </location>
</feature>
<feature type="sequence conflict" description="In Ref. 5; CAA42219." evidence="21" ref="5">
    <original>C</original>
    <variation>W</variation>
    <location>
        <position position="539"/>
    </location>
</feature>
<feature type="sequence conflict" description="In Ref. 4; AAA17899." evidence="21" ref="4">
    <original>L</original>
    <variation>F</variation>
    <location>
        <position position="991"/>
    </location>
</feature>
<feature type="sequence conflict" description="In Ref. 6; CAA78249." evidence="21" ref="6">
    <original>HP</original>
    <variation>DR</variation>
    <location>
        <begin position="1116"/>
        <end position="1117"/>
    </location>
</feature>